<gene>
    <name evidence="1" type="primary">rpsP</name>
    <name type="ordered locus">PTH_1723</name>
</gene>
<name>RS16_PELTS</name>
<proteinExistence type="inferred from homology"/>
<organism>
    <name type="scientific">Pelotomaculum thermopropionicum (strain DSM 13744 / JCM 10971 / SI)</name>
    <dbReference type="NCBI Taxonomy" id="370438"/>
    <lineage>
        <taxon>Bacteria</taxon>
        <taxon>Bacillati</taxon>
        <taxon>Bacillota</taxon>
        <taxon>Clostridia</taxon>
        <taxon>Eubacteriales</taxon>
        <taxon>Desulfotomaculaceae</taxon>
        <taxon>Pelotomaculum</taxon>
    </lineage>
</organism>
<evidence type="ECO:0000255" key="1">
    <source>
        <dbReference type="HAMAP-Rule" id="MF_00385"/>
    </source>
</evidence>
<evidence type="ECO:0000305" key="2"/>
<protein>
    <recommendedName>
        <fullName evidence="1">Small ribosomal subunit protein bS16</fullName>
    </recommendedName>
    <alternativeName>
        <fullName evidence="2">30S ribosomal protein S16</fullName>
    </alternativeName>
</protein>
<feature type="chain" id="PRO_1000080160" description="Small ribosomal subunit protein bS16">
    <location>
        <begin position="1"/>
        <end position="88"/>
    </location>
</feature>
<keyword id="KW-1185">Reference proteome</keyword>
<keyword id="KW-0687">Ribonucleoprotein</keyword>
<keyword id="KW-0689">Ribosomal protein</keyword>
<sequence>MAVKIRLRRMGAKKAPFYRIVVADSRSPRDGRFIEEIGYYDPLKKPAVINVNAERALDWLKKGAQLSDTAKALLTKAGVLKKTAGEGQ</sequence>
<comment type="similarity">
    <text evidence="1">Belongs to the bacterial ribosomal protein bS16 family.</text>
</comment>
<reference key="1">
    <citation type="journal article" date="2008" name="Genome Res.">
        <title>The genome of Pelotomaculum thermopropionicum reveals niche-associated evolution in anaerobic microbiota.</title>
        <authorList>
            <person name="Kosaka T."/>
            <person name="Kato S."/>
            <person name="Shimoyama T."/>
            <person name="Ishii S."/>
            <person name="Abe T."/>
            <person name="Watanabe K."/>
        </authorList>
    </citation>
    <scope>NUCLEOTIDE SEQUENCE [LARGE SCALE GENOMIC DNA]</scope>
    <source>
        <strain>DSM 13744 / JCM 10971 / SI</strain>
    </source>
</reference>
<accession>A5D1G1</accession>
<dbReference type="EMBL" id="AP009389">
    <property type="protein sequence ID" value="BAF59904.1"/>
    <property type="molecule type" value="Genomic_DNA"/>
</dbReference>
<dbReference type="SMR" id="A5D1G1"/>
<dbReference type="STRING" id="370438.PTH_1723"/>
<dbReference type="KEGG" id="pth:PTH_1723"/>
<dbReference type="eggNOG" id="COG0228">
    <property type="taxonomic scope" value="Bacteria"/>
</dbReference>
<dbReference type="HOGENOM" id="CLU_100590_5_0_9"/>
<dbReference type="Proteomes" id="UP000006556">
    <property type="component" value="Chromosome"/>
</dbReference>
<dbReference type="GO" id="GO:0005737">
    <property type="term" value="C:cytoplasm"/>
    <property type="evidence" value="ECO:0007669"/>
    <property type="project" value="UniProtKB-ARBA"/>
</dbReference>
<dbReference type="GO" id="GO:0015935">
    <property type="term" value="C:small ribosomal subunit"/>
    <property type="evidence" value="ECO:0007669"/>
    <property type="project" value="TreeGrafter"/>
</dbReference>
<dbReference type="GO" id="GO:0003735">
    <property type="term" value="F:structural constituent of ribosome"/>
    <property type="evidence" value="ECO:0007669"/>
    <property type="project" value="InterPro"/>
</dbReference>
<dbReference type="GO" id="GO:0006412">
    <property type="term" value="P:translation"/>
    <property type="evidence" value="ECO:0007669"/>
    <property type="project" value="UniProtKB-UniRule"/>
</dbReference>
<dbReference type="FunFam" id="3.30.1320.10:FF:000005">
    <property type="entry name" value="30S ribosomal protein S16"/>
    <property type="match status" value="1"/>
</dbReference>
<dbReference type="Gene3D" id="3.30.1320.10">
    <property type="match status" value="1"/>
</dbReference>
<dbReference type="HAMAP" id="MF_00385">
    <property type="entry name" value="Ribosomal_bS16"/>
    <property type="match status" value="1"/>
</dbReference>
<dbReference type="InterPro" id="IPR000307">
    <property type="entry name" value="Ribosomal_bS16"/>
</dbReference>
<dbReference type="InterPro" id="IPR023803">
    <property type="entry name" value="Ribosomal_bS16_dom_sf"/>
</dbReference>
<dbReference type="NCBIfam" id="TIGR00002">
    <property type="entry name" value="S16"/>
    <property type="match status" value="1"/>
</dbReference>
<dbReference type="PANTHER" id="PTHR12919">
    <property type="entry name" value="30S RIBOSOMAL PROTEIN S16"/>
    <property type="match status" value="1"/>
</dbReference>
<dbReference type="PANTHER" id="PTHR12919:SF20">
    <property type="entry name" value="SMALL RIBOSOMAL SUBUNIT PROTEIN BS16M"/>
    <property type="match status" value="1"/>
</dbReference>
<dbReference type="Pfam" id="PF00886">
    <property type="entry name" value="Ribosomal_S16"/>
    <property type="match status" value="1"/>
</dbReference>
<dbReference type="SUPFAM" id="SSF54565">
    <property type="entry name" value="Ribosomal protein S16"/>
    <property type="match status" value="1"/>
</dbReference>